<feature type="chain" id="PRO_0000167941" description="Small ribosomal subunit protein bS20">
    <location>
        <begin position="1"/>
        <end position="88"/>
    </location>
</feature>
<organism>
    <name type="scientific">Blochmanniella floridana</name>
    <dbReference type="NCBI Taxonomy" id="203907"/>
    <lineage>
        <taxon>Bacteria</taxon>
        <taxon>Pseudomonadati</taxon>
        <taxon>Pseudomonadota</taxon>
        <taxon>Gammaproteobacteria</taxon>
        <taxon>Enterobacterales</taxon>
        <taxon>Enterobacteriaceae</taxon>
        <taxon>ant endosymbionts</taxon>
        <taxon>Candidatus Blochmanniella</taxon>
    </lineage>
</organism>
<evidence type="ECO:0000255" key="1">
    <source>
        <dbReference type="HAMAP-Rule" id="MF_00500"/>
    </source>
</evidence>
<evidence type="ECO:0000305" key="2"/>
<accession>Q7VQL2</accession>
<comment type="function">
    <text evidence="1">Binds directly to 16S ribosomal RNA.</text>
</comment>
<comment type="similarity">
    <text evidence="1">Belongs to the bacterial ribosomal protein bS20 family.</text>
</comment>
<keyword id="KW-1185">Reference proteome</keyword>
<keyword id="KW-0687">Ribonucleoprotein</keyword>
<keyword id="KW-0689">Ribosomal protein</keyword>
<keyword id="KW-0694">RNA-binding</keyword>
<keyword id="KW-0699">rRNA-binding</keyword>
<reference key="1">
    <citation type="journal article" date="2003" name="Proc. Natl. Acad. Sci. U.S.A.">
        <title>The genome sequence of Blochmannia floridanus: comparative analysis of reduced genomes.</title>
        <authorList>
            <person name="Gil R."/>
            <person name="Silva F.J."/>
            <person name="Zientz E."/>
            <person name="Delmotte F."/>
            <person name="Gonzalez-Candelas F."/>
            <person name="Latorre A."/>
            <person name="Rausell C."/>
            <person name="Kamerbeek J."/>
            <person name="Gadau J."/>
            <person name="Hoelldobler B."/>
            <person name="van Ham R.C.H.J."/>
            <person name="Gross R."/>
            <person name="Moya A."/>
        </authorList>
    </citation>
    <scope>NUCLEOTIDE SEQUENCE [LARGE SCALE GENOMIC DNA]</scope>
</reference>
<dbReference type="EMBL" id="BX248583">
    <property type="protein sequence ID" value="CAD83637.1"/>
    <property type="molecule type" value="Genomic_DNA"/>
</dbReference>
<dbReference type="SMR" id="Q7VQL2"/>
<dbReference type="STRING" id="203907.Bfl116"/>
<dbReference type="KEGG" id="bfl:Bfl116"/>
<dbReference type="eggNOG" id="COG0268">
    <property type="taxonomic scope" value="Bacteria"/>
</dbReference>
<dbReference type="HOGENOM" id="CLU_160655_4_0_6"/>
<dbReference type="OrthoDB" id="9807974at2"/>
<dbReference type="Proteomes" id="UP000002192">
    <property type="component" value="Chromosome"/>
</dbReference>
<dbReference type="GO" id="GO:0005829">
    <property type="term" value="C:cytosol"/>
    <property type="evidence" value="ECO:0007669"/>
    <property type="project" value="TreeGrafter"/>
</dbReference>
<dbReference type="GO" id="GO:0015935">
    <property type="term" value="C:small ribosomal subunit"/>
    <property type="evidence" value="ECO:0007669"/>
    <property type="project" value="TreeGrafter"/>
</dbReference>
<dbReference type="GO" id="GO:0070181">
    <property type="term" value="F:small ribosomal subunit rRNA binding"/>
    <property type="evidence" value="ECO:0007669"/>
    <property type="project" value="TreeGrafter"/>
</dbReference>
<dbReference type="GO" id="GO:0003735">
    <property type="term" value="F:structural constituent of ribosome"/>
    <property type="evidence" value="ECO:0007669"/>
    <property type="project" value="InterPro"/>
</dbReference>
<dbReference type="GO" id="GO:0006412">
    <property type="term" value="P:translation"/>
    <property type="evidence" value="ECO:0007669"/>
    <property type="project" value="UniProtKB-UniRule"/>
</dbReference>
<dbReference type="Gene3D" id="1.20.58.110">
    <property type="entry name" value="Ribosomal protein S20"/>
    <property type="match status" value="1"/>
</dbReference>
<dbReference type="HAMAP" id="MF_00500">
    <property type="entry name" value="Ribosomal_bS20"/>
    <property type="match status" value="1"/>
</dbReference>
<dbReference type="InterPro" id="IPR002583">
    <property type="entry name" value="Ribosomal_bS20"/>
</dbReference>
<dbReference type="InterPro" id="IPR036510">
    <property type="entry name" value="Ribosomal_bS20_sf"/>
</dbReference>
<dbReference type="NCBIfam" id="TIGR00029">
    <property type="entry name" value="S20"/>
    <property type="match status" value="1"/>
</dbReference>
<dbReference type="PANTHER" id="PTHR33398">
    <property type="entry name" value="30S RIBOSOMAL PROTEIN S20"/>
    <property type="match status" value="1"/>
</dbReference>
<dbReference type="PANTHER" id="PTHR33398:SF1">
    <property type="entry name" value="SMALL RIBOSOMAL SUBUNIT PROTEIN BS20C"/>
    <property type="match status" value="1"/>
</dbReference>
<dbReference type="Pfam" id="PF01649">
    <property type="entry name" value="Ribosomal_S20p"/>
    <property type="match status" value="1"/>
</dbReference>
<dbReference type="SUPFAM" id="SSF46992">
    <property type="entry name" value="Ribosomal protein S20"/>
    <property type="match status" value="1"/>
</dbReference>
<name>RS20_BLOFL</name>
<proteinExistence type="inferred from homology"/>
<protein>
    <recommendedName>
        <fullName evidence="1">Small ribosomal subunit protein bS20</fullName>
    </recommendedName>
    <alternativeName>
        <fullName evidence="2">30S ribosomal protein S20</fullName>
    </alternativeName>
</protein>
<sequence>MANTKSAKKFIIKSKKNRNRNLSNRSMLKTFIKKVNIAINKRNISEALFAFKNMQKCIDRQSIKGLIHKNKAARCKSKIFRRISLLIN</sequence>
<gene>
    <name evidence="1" type="primary">rpsT</name>
    <name type="ordered locus">Bfl116</name>
</gene>